<comment type="function">
    <text evidence="1">Catalyzes the transfer of a ribosyl phosphate group from 5-phosphoribose 1-diphosphate to orotate, leading to the formation of orotidine monophosphate (OMP).</text>
</comment>
<comment type="catalytic activity">
    <reaction evidence="1">
        <text>orotidine 5'-phosphate + diphosphate = orotate + 5-phospho-alpha-D-ribose 1-diphosphate</text>
        <dbReference type="Rhea" id="RHEA:10380"/>
        <dbReference type="ChEBI" id="CHEBI:30839"/>
        <dbReference type="ChEBI" id="CHEBI:33019"/>
        <dbReference type="ChEBI" id="CHEBI:57538"/>
        <dbReference type="ChEBI" id="CHEBI:58017"/>
        <dbReference type="EC" id="2.4.2.10"/>
    </reaction>
</comment>
<comment type="cofactor">
    <cofactor evidence="1">
        <name>Mg(2+)</name>
        <dbReference type="ChEBI" id="CHEBI:18420"/>
    </cofactor>
</comment>
<comment type="pathway">
    <text evidence="1">Pyrimidine metabolism; UMP biosynthesis via de novo pathway; UMP from orotate: step 1/2.</text>
</comment>
<comment type="subunit">
    <text evidence="1">Homodimer.</text>
</comment>
<comment type="similarity">
    <text evidence="1">Belongs to the purine/pyrimidine phosphoribosyltransferase family. PyrE subfamily.</text>
</comment>
<dbReference type="EC" id="2.4.2.10" evidence="1"/>
<dbReference type="EMBL" id="BX571657">
    <property type="protein sequence ID" value="CAE09466.1"/>
    <property type="molecule type" value="Genomic_DNA"/>
</dbReference>
<dbReference type="RefSeq" id="WP_011138267.1">
    <property type="nucleotide sequence ID" value="NC_005090.1"/>
</dbReference>
<dbReference type="SMR" id="Q7MAD7"/>
<dbReference type="STRING" id="273121.WS0315"/>
<dbReference type="KEGG" id="wsu:WS0315"/>
<dbReference type="eggNOG" id="COG0461">
    <property type="taxonomic scope" value="Bacteria"/>
</dbReference>
<dbReference type="HOGENOM" id="CLU_074878_3_0_7"/>
<dbReference type="UniPathway" id="UPA00070">
    <property type="reaction ID" value="UER00119"/>
</dbReference>
<dbReference type="Proteomes" id="UP000000422">
    <property type="component" value="Chromosome"/>
</dbReference>
<dbReference type="GO" id="GO:0000287">
    <property type="term" value="F:magnesium ion binding"/>
    <property type="evidence" value="ECO:0007669"/>
    <property type="project" value="UniProtKB-UniRule"/>
</dbReference>
<dbReference type="GO" id="GO:0004588">
    <property type="term" value="F:orotate phosphoribosyltransferase activity"/>
    <property type="evidence" value="ECO:0007669"/>
    <property type="project" value="UniProtKB-UniRule"/>
</dbReference>
<dbReference type="GO" id="GO:0044205">
    <property type="term" value="P:'de novo' UMP biosynthetic process"/>
    <property type="evidence" value="ECO:0007669"/>
    <property type="project" value="UniProtKB-UniRule"/>
</dbReference>
<dbReference type="GO" id="GO:0019856">
    <property type="term" value="P:pyrimidine nucleobase biosynthetic process"/>
    <property type="evidence" value="ECO:0007669"/>
    <property type="project" value="InterPro"/>
</dbReference>
<dbReference type="CDD" id="cd06223">
    <property type="entry name" value="PRTases_typeI"/>
    <property type="match status" value="1"/>
</dbReference>
<dbReference type="Gene3D" id="3.40.50.2020">
    <property type="match status" value="1"/>
</dbReference>
<dbReference type="HAMAP" id="MF_01208">
    <property type="entry name" value="PyrE"/>
    <property type="match status" value="1"/>
</dbReference>
<dbReference type="InterPro" id="IPR023031">
    <property type="entry name" value="OPRT"/>
</dbReference>
<dbReference type="InterPro" id="IPR006273">
    <property type="entry name" value="Orotate_PRibTrfase_bac"/>
</dbReference>
<dbReference type="InterPro" id="IPR000836">
    <property type="entry name" value="PRibTrfase_dom"/>
</dbReference>
<dbReference type="InterPro" id="IPR029057">
    <property type="entry name" value="PRTase-like"/>
</dbReference>
<dbReference type="NCBIfam" id="TIGR01367">
    <property type="entry name" value="pyrE_Therm"/>
    <property type="match status" value="1"/>
</dbReference>
<dbReference type="PANTHER" id="PTHR19278">
    <property type="entry name" value="OROTATE PHOSPHORIBOSYLTRANSFERASE"/>
    <property type="match status" value="1"/>
</dbReference>
<dbReference type="PANTHER" id="PTHR19278:SF9">
    <property type="entry name" value="URIDINE 5'-MONOPHOSPHATE SYNTHASE"/>
    <property type="match status" value="1"/>
</dbReference>
<dbReference type="Pfam" id="PF00156">
    <property type="entry name" value="Pribosyltran"/>
    <property type="match status" value="1"/>
</dbReference>
<dbReference type="SUPFAM" id="SSF53271">
    <property type="entry name" value="PRTase-like"/>
    <property type="match status" value="1"/>
</dbReference>
<dbReference type="PROSITE" id="PS00103">
    <property type="entry name" value="PUR_PYR_PR_TRANSFER"/>
    <property type="match status" value="1"/>
</dbReference>
<organism>
    <name type="scientific">Wolinella succinogenes (strain ATCC 29543 / DSM 1740 / CCUG 13145 / JCM 31913 / LMG 7466 / NCTC 11488 / FDC 602W)</name>
    <name type="common">Vibrio succinogenes</name>
    <dbReference type="NCBI Taxonomy" id="273121"/>
    <lineage>
        <taxon>Bacteria</taxon>
        <taxon>Pseudomonadati</taxon>
        <taxon>Campylobacterota</taxon>
        <taxon>Epsilonproteobacteria</taxon>
        <taxon>Campylobacterales</taxon>
        <taxon>Helicobacteraceae</taxon>
        <taxon>Wolinella</taxon>
    </lineage>
</organism>
<keyword id="KW-0328">Glycosyltransferase</keyword>
<keyword id="KW-0460">Magnesium</keyword>
<keyword id="KW-0665">Pyrimidine biosynthesis</keyword>
<keyword id="KW-1185">Reference proteome</keyword>
<keyword id="KW-0808">Transferase</keyword>
<gene>
    <name evidence="1" type="primary">pyrE</name>
    <name type="ordered locus">WS0315</name>
</gene>
<protein>
    <recommendedName>
        <fullName evidence="1">Orotate phosphoribosyltransferase</fullName>
        <shortName evidence="1">OPRT</shortName>
        <shortName evidence="1">OPRTase</shortName>
        <ecNumber evidence="1">2.4.2.10</ecNumber>
    </recommendedName>
</protein>
<feature type="chain" id="PRO_0000110769" description="Orotate phosphoribosyltransferase">
    <location>
        <begin position="1"/>
        <end position="205"/>
    </location>
</feature>
<feature type="binding site" evidence="1">
    <location>
        <begin position="116"/>
        <end position="124"/>
    </location>
    <ligand>
        <name>5-phospho-alpha-D-ribose 1-diphosphate</name>
        <dbReference type="ChEBI" id="CHEBI:58017"/>
    </ligand>
</feature>
<feature type="binding site" evidence="1">
    <location>
        <position position="120"/>
    </location>
    <ligand>
        <name>orotate</name>
        <dbReference type="ChEBI" id="CHEBI:30839"/>
    </ligand>
</feature>
<feature type="binding site" evidence="1">
    <location>
        <position position="148"/>
    </location>
    <ligand>
        <name>orotate</name>
        <dbReference type="ChEBI" id="CHEBI:30839"/>
    </ligand>
</feature>
<proteinExistence type="inferred from homology"/>
<accession>Q7MAD7</accession>
<reference key="1">
    <citation type="journal article" date="2003" name="Proc. Natl. Acad. Sci. U.S.A.">
        <title>Complete genome sequence and analysis of Wolinella succinogenes.</title>
        <authorList>
            <person name="Baar C."/>
            <person name="Eppinger M."/>
            <person name="Raddatz G."/>
            <person name="Simon J."/>
            <person name="Lanz C."/>
            <person name="Klimmek O."/>
            <person name="Nandakumar R."/>
            <person name="Gross R."/>
            <person name="Rosinus A."/>
            <person name="Keller H."/>
            <person name="Jagtap P."/>
            <person name="Linke B."/>
            <person name="Meyer F."/>
            <person name="Lederer H."/>
            <person name="Schuster S.C."/>
        </authorList>
    </citation>
    <scope>NUCLEOTIDE SEQUENCE [LARGE SCALE GENOMIC DNA]</scope>
    <source>
        <strain>ATCC 29543 / DSM 1740 / CCUG 13145 / JCM 31913 / LMG 7466 / NCTC 11488 / FDC 602W</strain>
    </source>
</reference>
<name>PYRE_WOLSU</name>
<evidence type="ECO:0000255" key="1">
    <source>
        <dbReference type="HAMAP-Rule" id="MF_01208"/>
    </source>
</evidence>
<sequence>MSRLNIEQVYKEAQALLEGHFLLSSGNHSNFYLQSAKVLENPKVAESLAKALAEEIRAFGLTIDTVCSPALGGVLAGYELARALGVRFIFTERVEGKMTLRRGFEVASGEKILICEDIITTGGSAVESAMEVERLGAQVVGYAALANRGFCQRVGSSLERKPNAKLPPHLPFFALDDFVFDLYSPQDCPLCKTGSKPIKPGSRGN</sequence>